<accession>Q9HS36</accession>
<sequence>MFGGGGMNPRKMQQMMEQMGIDVDELDATEVVISLDDGTEVVFSDPDVTKMDARGQETYQVLGDPVERDAADAIEAAPADDSDDTDDDDAIPQGDVDIVVQRASVPEDEAREALEAADGDLAAAIDHVDE</sequence>
<reference key="1">
    <citation type="journal article" date="2000" name="Proc. Natl. Acad. Sci. U.S.A.">
        <title>Genome sequence of Halobacterium species NRC-1.</title>
        <authorList>
            <person name="Ng W.V."/>
            <person name="Kennedy S.P."/>
            <person name="Mahairas G.G."/>
            <person name="Berquist B."/>
            <person name="Pan M."/>
            <person name="Shukla H.D."/>
            <person name="Lasky S.R."/>
            <person name="Baliga N.S."/>
            <person name="Thorsson V."/>
            <person name="Sbrogna J."/>
            <person name="Swartzell S."/>
            <person name="Weir D."/>
            <person name="Hall J."/>
            <person name="Dahl T.A."/>
            <person name="Welti R."/>
            <person name="Goo Y.A."/>
            <person name="Leithauser B."/>
            <person name="Keller K."/>
            <person name="Cruz R."/>
            <person name="Danson M.J."/>
            <person name="Hough D.W."/>
            <person name="Maddocks D.G."/>
            <person name="Jablonski P.E."/>
            <person name="Krebs M.P."/>
            <person name="Angevine C.M."/>
            <person name="Dale H."/>
            <person name="Isenbarger T.A."/>
            <person name="Peck R.F."/>
            <person name="Pohlschroder M."/>
            <person name="Spudich J.L."/>
            <person name="Jung K.-H."/>
            <person name="Alam M."/>
            <person name="Freitas T."/>
            <person name="Hou S."/>
            <person name="Daniels C.J."/>
            <person name="Dennis P.P."/>
            <person name="Omer A.D."/>
            <person name="Ebhardt H."/>
            <person name="Lowe T.M."/>
            <person name="Liang P."/>
            <person name="Riley M."/>
            <person name="Hood L."/>
            <person name="DasSarma S."/>
        </authorList>
    </citation>
    <scope>NUCLEOTIDE SEQUENCE [LARGE SCALE GENOMIC DNA]</scope>
    <source>
        <strain>ATCC 700922 / JCM 11081 / NRC-1</strain>
    </source>
</reference>
<gene>
    <name evidence="1" type="primary">nac</name>
    <name type="ordered locus">VNG_0424C</name>
</gene>
<protein>
    <recommendedName>
        <fullName evidence="1">Nascent polypeptide-associated complex protein</fullName>
    </recommendedName>
</protein>
<organism>
    <name type="scientific">Halobacterium salinarum (strain ATCC 700922 / JCM 11081 / NRC-1)</name>
    <name type="common">Halobacterium halobium</name>
    <dbReference type="NCBI Taxonomy" id="64091"/>
    <lineage>
        <taxon>Archaea</taxon>
        <taxon>Methanobacteriati</taxon>
        <taxon>Methanobacteriota</taxon>
        <taxon>Stenosarchaea group</taxon>
        <taxon>Halobacteria</taxon>
        <taxon>Halobacteriales</taxon>
        <taxon>Halobacteriaceae</taxon>
        <taxon>Halobacterium</taxon>
        <taxon>Halobacterium salinarum NRC-34001</taxon>
    </lineage>
</organism>
<feature type="chain" id="PRO_0000135598" description="Nascent polypeptide-associated complex protein">
    <location>
        <begin position="1"/>
        <end position="130"/>
    </location>
</feature>
<feature type="domain" description="NAC-A/B" evidence="1">
    <location>
        <begin position="6"/>
        <end position="74"/>
    </location>
</feature>
<feature type="region of interest" description="Disordered" evidence="2">
    <location>
        <begin position="65"/>
        <end position="91"/>
    </location>
</feature>
<feature type="compositionally biased region" description="Acidic residues" evidence="2">
    <location>
        <begin position="78"/>
        <end position="90"/>
    </location>
</feature>
<proteinExistence type="inferred from homology"/>
<name>NAC_HALSA</name>
<comment type="function">
    <text evidence="1">Contacts the emerging nascent chain on the ribosome.</text>
</comment>
<comment type="subunit">
    <text evidence="1">Homodimer. Interacts with the ribosome. Binds ribosomal RNA.</text>
</comment>
<comment type="similarity">
    <text evidence="1">Belongs to the NAC-alpha family.</text>
</comment>
<keyword id="KW-0653">Protein transport</keyword>
<keyword id="KW-1185">Reference proteome</keyword>
<keyword id="KW-0694">RNA-binding</keyword>
<keyword id="KW-0813">Transport</keyword>
<evidence type="ECO:0000255" key="1">
    <source>
        <dbReference type="HAMAP-Rule" id="MF_00814"/>
    </source>
</evidence>
<evidence type="ECO:0000256" key="2">
    <source>
        <dbReference type="SAM" id="MobiDB-lite"/>
    </source>
</evidence>
<dbReference type="EMBL" id="AE004437">
    <property type="protein sequence ID" value="AAG18972.1"/>
    <property type="molecule type" value="Genomic_DNA"/>
</dbReference>
<dbReference type="PIR" id="H84200">
    <property type="entry name" value="H84200"/>
</dbReference>
<dbReference type="RefSeq" id="WP_010902267.1">
    <property type="nucleotide sequence ID" value="NC_002607.1"/>
</dbReference>
<dbReference type="SMR" id="Q9HS36"/>
<dbReference type="FunCoup" id="Q9HS36">
    <property type="interactions" value="67"/>
</dbReference>
<dbReference type="STRING" id="64091.VNG_0424C"/>
<dbReference type="PaxDb" id="64091-VNG_0424C"/>
<dbReference type="KEGG" id="hal:VNG_0424C"/>
<dbReference type="PATRIC" id="fig|64091.14.peg.316"/>
<dbReference type="HOGENOM" id="CLU_146475_1_0_2"/>
<dbReference type="InParanoid" id="Q9HS36"/>
<dbReference type="OrthoDB" id="53273at2157"/>
<dbReference type="Proteomes" id="UP000000554">
    <property type="component" value="Chromosome"/>
</dbReference>
<dbReference type="GO" id="GO:0003723">
    <property type="term" value="F:RNA binding"/>
    <property type="evidence" value="ECO:0007669"/>
    <property type="project" value="UniProtKB-UniRule"/>
</dbReference>
<dbReference type="GO" id="GO:0015031">
    <property type="term" value="P:protein transport"/>
    <property type="evidence" value="ECO:0007669"/>
    <property type="project" value="UniProtKB-UniRule"/>
</dbReference>
<dbReference type="Gene3D" id="1.10.8.10">
    <property type="entry name" value="DNA helicase RuvA subunit, C-terminal domain"/>
    <property type="match status" value="1"/>
</dbReference>
<dbReference type="Gene3D" id="2.20.70.30">
    <property type="entry name" value="Nascent polypeptide-associated complex domain"/>
    <property type="match status" value="1"/>
</dbReference>
<dbReference type="HAMAP" id="MF_00814">
    <property type="entry name" value="NAC_arch"/>
    <property type="match status" value="1"/>
</dbReference>
<dbReference type="InterPro" id="IPR038187">
    <property type="entry name" value="NAC_A/B_dom_sf"/>
</dbReference>
<dbReference type="InterPro" id="IPR005231">
    <property type="entry name" value="NAC_arc"/>
</dbReference>
<dbReference type="InterPro" id="IPR002715">
    <property type="entry name" value="Nas_poly-pep-assoc_cplx_dom"/>
</dbReference>
<dbReference type="NCBIfam" id="TIGR00264">
    <property type="entry name" value="archaeal-type nascent polypeptide-associated complex protein"/>
    <property type="match status" value="1"/>
</dbReference>
<dbReference type="Pfam" id="PF01849">
    <property type="entry name" value="NAC"/>
    <property type="match status" value="1"/>
</dbReference>
<dbReference type="SMART" id="SM01407">
    <property type="entry name" value="NAC"/>
    <property type="match status" value="1"/>
</dbReference>
<dbReference type="PROSITE" id="PS51151">
    <property type="entry name" value="NAC_AB"/>
    <property type="match status" value="1"/>
</dbReference>